<organism>
    <name type="scientific">Escherichia coli O157:H7</name>
    <dbReference type="NCBI Taxonomy" id="83334"/>
    <lineage>
        <taxon>Bacteria</taxon>
        <taxon>Pseudomonadati</taxon>
        <taxon>Pseudomonadota</taxon>
        <taxon>Gammaproteobacteria</taxon>
        <taxon>Enterobacterales</taxon>
        <taxon>Enterobacteriaceae</taxon>
        <taxon>Escherichia</taxon>
    </lineage>
</organism>
<comment type="function">
    <text evidence="1">Involved in cell division, cell envelope biogenesis and cell shape maintenance.</text>
</comment>
<comment type="subcellular location">
    <subcellularLocation>
        <location evidence="1">Cell inner membrane</location>
        <topology evidence="2">Single-pass membrane protein</topology>
    </subcellularLocation>
</comment>
<comment type="similarity">
    <text evidence="4">Belongs to the ZapG family.</text>
</comment>
<comment type="sequence caution" evidence="4">
    <conflict type="erroneous initiation">
        <sequence resource="EMBL-CDS" id="AAG58361"/>
    </conflict>
    <text>Extended N-terminus.</text>
</comment>
<dbReference type="EMBL" id="AE005174">
    <property type="protein sequence ID" value="AAG58361.1"/>
    <property type="status" value="ALT_INIT"/>
    <property type="molecule type" value="Genomic_DNA"/>
</dbReference>
<dbReference type="EMBL" id="BA000007">
    <property type="protein sequence ID" value="BAB37529.2"/>
    <property type="molecule type" value="Genomic_DNA"/>
</dbReference>
<dbReference type="PIR" id="B91142">
    <property type="entry name" value="B91142"/>
</dbReference>
<dbReference type="PIR" id="E85987">
    <property type="entry name" value="E85987"/>
</dbReference>
<dbReference type="RefSeq" id="NP_312133.2">
    <property type="nucleotide sequence ID" value="NC_002695.1"/>
</dbReference>
<dbReference type="RefSeq" id="WP_001295270.1">
    <property type="nucleotide sequence ID" value="NZ_VOAI01000014.1"/>
</dbReference>
<dbReference type="SMR" id="P0ADW5"/>
<dbReference type="STRING" id="155864.Z4592"/>
<dbReference type="GeneID" id="916045"/>
<dbReference type="GeneID" id="93778753"/>
<dbReference type="KEGG" id="ece:Z4592"/>
<dbReference type="KEGG" id="ecs:ECs_4106"/>
<dbReference type="PATRIC" id="fig|386585.9.peg.4287"/>
<dbReference type="eggNOG" id="COG3105">
    <property type="taxonomic scope" value="Bacteria"/>
</dbReference>
<dbReference type="HOGENOM" id="CLU_135606_1_0_6"/>
<dbReference type="OMA" id="HMAKTSS"/>
<dbReference type="Proteomes" id="UP000000558">
    <property type="component" value="Chromosome"/>
</dbReference>
<dbReference type="Proteomes" id="UP000002519">
    <property type="component" value="Chromosome"/>
</dbReference>
<dbReference type="GO" id="GO:0005886">
    <property type="term" value="C:plasma membrane"/>
    <property type="evidence" value="ECO:0007669"/>
    <property type="project" value="UniProtKB-SubCell"/>
</dbReference>
<dbReference type="GO" id="GO:0051301">
    <property type="term" value="P:cell division"/>
    <property type="evidence" value="ECO:0007669"/>
    <property type="project" value="UniProtKB-KW"/>
</dbReference>
<dbReference type="GO" id="GO:0008360">
    <property type="term" value="P:regulation of cell shape"/>
    <property type="evidence" value="ECO:0007669"/>
    <property type="project" value="UniProtKB-KW"/>
</dbReference>
<dbReference type="InterPro" id="IPR009386">
    <property type="entry name" value="ZapG-like"/>
</dbReference>
<dbReference type="NCBIfam" id="NF008672">
    <property type="entry name" value="PRK11677.1"/>
    <property type="match status" value="1"/>
</dbReference>
<dbReference type="PANTHER" id="PTHR39579">
    <property type="entry name" value="INNER MEMBRANE PROTEIN YHCB"/>
    <property type="match status" value="1"/>
</dbReference>
<dbReference type="PANTHER" id="PTHR39579:SF1">
    <property type="entry name" value="INNER MEMBRANE PROTEIN YHCB"/>
    <property type="match status" value="1"/>
</dbReference>
<dbReference type="Pfam" id="PF06295">
    <property type="entry name" value="ZapG-like"/>
    <property type="match status" value="1"/>
</dbReference>
<dbReference type="PIRSF" id="PIRSF006318">
    <property type="entry name" value="YhcB"/>
    <property type="match status" value="1"/>
</dbReference>
<protein>
    <recommendedName>
        <fullName evidence="1">Z-ring associated protein G</fullName>
    </recommendedName>
    <alternativeName>
        <fullName evidence="1">Cell division protein ZapG</fullName>
    </alternativeName>
</protein>
<keyword id="KW-0131">Cell cycle</keyword>
<keyword id="KW-0132">Cell division</keyword>
<keyword id="KW-0997">Cell inner membrane</keyword>
<keyword id="KW-1003">Cell membrane</keyword>
<keyword id="KW-0133">Cell shape</keyword>
<keyword id="KW-0472">Membrane</keyword>
<keyword id="KW-1185">Reference proteome</keyword>
<keyword id="KW-0812">Transmembrane</keyword>
<keyword id="KW-1133">Transmembrane helix</keyword>
<gene>
    <name evidence="1" type="primary">zapG</name>
    <name type="synonym">yhcB</name>
    <name type="ordered locus">Z4592</name>
    <name type="ordered locus">ECs4106</name>
</gene>
<reference key="1">
    <citation type="journal article" date="2001" name="Nature">
        <title>Genome sequence of enterohaemorrhagic Escherichia coli O157:H7.</title>
        <authorList>
            <person name="Perna N.T."/>
            <person name="Plunkett G. III"/>
            <person name="Burland V."/>
            <person name="Mau B."/>
            <person name="Glasner J.D."/>
            <person name="Rose D.J."/>
            <person name="Mayhew G.F."/>
            <person name="Evans P.S."/>
            <person name="Gregor J."/>
            <person name="Kirkpatrick H.A."/>
            <person name="Posfai G."/>
            <person name="Hackett J."/>
            <person name="Klink S."/>
            <person name="Boutin A."/>
            <person name="Shao Y."/>
            <person name="Miller L."/>
            <person name="Grotbeck E.J."/>
            <person name="Davis N.W."/>
            <person name="Lim A."/>
            <person name="Dimalanta E.T."/>
            <person name="Potamousis K."/>
            <person name="Apodaca J."/>
            <person name="Anantharaman T.S."/>
            <person name="Lin J."/>
            <person name="Yen G."/>
            <person name="Schwartz D.C."/>
            <person name="Welch R.A."/>
            <person name="Blattner F.R."/>
        </authorList>
    </citation>
    <scope>NUCLEOTIDE SEQUENCE [LARGE SCALE GENOMIC DNA]</scope>
    <source>
        <strain>O157:H7 / EDL933 / ATCC 700927 / EHEC</strain>
    </source>
</reference>
<reference key="2">
    <citation type="journal article" date="2001" name="DNA Res.">
        <title>Complete genome sequence of enterohemorrhagic Escherichia coli O157:H7 and genomic comparison with a laboratory strain K-12.</title>
        <authorList>
            <person name="Hayashi T."/>
            <person name="Makino K."/>
            <person name="Ohnishi M."/>
            <person name="Kurokawa K."/>
            <person name="Ishii K."/>
            <person name="Yokoyama K."/>
            <person name="Han C.-G."/>
            <person name="Ohtsubo E."/>
            <person name="Nakayama K."/>
            <person name="Murata T."/>
            <person name="Tanaka M."/>
            <person name="Tobe T."/>
            <person name="Iida T."/>
            <person name="Takami H."/>
            <person name="Honda T."/>
            <person name="Sasakawa C."/>
            <person name="Ogasawara N."/>
            <person name="Yasunaga T."/>
            <person name="Kuhara S."/>
            <person name="Shiba T."/>
            <person name="Hattori M."/>
            <person name="Shinagawa H."/>
        </authorList>
    </citation>
    <scope>NUCLEOTIDE SEQUENCE [LARGE SCALE GENOMIC DNA]</scope>
    <source>
        <strain>O157:H7 / Sakai / RIMD 0509952 / EHEC</strain>
    </source>
</reference>
<proteinExistence type="inferred from homology"/>
<accession>P0ADW5</accession>
<accession>P39436</accession>
<feature type="chain" id="PRO_0000169478" description="Z-ring associated protein G">
    <location>
        <begin position="1"/>
        <end position="132"/>
    </location>
</feature>
<feature type="transmembrane region" description="Helical" evidence="2">
    <location>
        <begin position="1"/>
        <end position="21"/>
    </location>
</feature>
<feature type="region of interest" description="Disordered" evidence="3">
    <location>
        <begin position="95"/>
        <end position="132"/>
    </location>
</feature>
<sequence>MTWEYALIGLVVGIIIGAVAMRFGNRKLRQQQALQYELEKNKAELDEYREELVSHFARSAELLDTMAHDYRQLYQHMAKSSSSLLPELSAEANPFRNRLAESEASNDQAPVQMPRDYSEGASGLLRTGAKRD</sequence>
<name>ZAPG_ECO57</name>
<evidence type="ECO:0000250" key="1">
    <source>
        <dbReference type="UniProtKB" id="P0ADW3"/>
    </source>
</evidence>
<evidence type="ECO:0000255" key="2"/>
<evidence type="ECO:0000256" key="3">
    <source>
        <dbReference type="SAM" id="MobiDB-lite"/>
    </source>
</evidence>
<evidence type="ECO:0000305" key="4"/>